<dbReference type="EC" id="2.7.7.72" evidence="1"/>
<dbReference type="EC" id="3.1.3.-" evidence="1"/>
<dbReference type="EC" id="3.1.4.-" evidence="1"/>
<dbReference type="EMBL" id="CP000462">
    <property type="protein sequence ID" value="ABK37631.1"/>
    <property type="molecule type" value="Genomic_DNA"/>
</dbReference>
<dbReference type="RefSeq" id="WP_011707495.1">
    <property type="nucleotide sequence ID" value="NC_008570.1"/>
</dbReference>
<dbReference type="RefSeq" id="YP_858232.1">
    <property type="nucleotide sequence ID" value="NC_008570.1"/>
</dbReference>
<dbReference type="SMR" id="A0KPN1"/>
<dbReference type="STRING" id="380703.AHA_3784"/>
<dbReference type="EnsemblBacteria" id="ABK37631">
    <property type="protein sequence ID" value="ABK37631"/>
    <property type="gene ID" value="AHA_3784"/>
</dbReference>
<dbReference type="GeneID" id="4487794"/>
<dbReference type="KEGG" id="aha:AHA_3784"/>
<dbReference type="PATRIC" id="fig|380703.7.peg.3758"/>
<dbReference type="eggNOG" id="COG0617">
    <property type="taxonomic scope" value="Bacteria"/>
</dbReference>
<dbReference type="HOGENOM" id="CLU_015961_1_1_6"/>
<dbReference type="OrthoDB" id="9805698at2"/>
<dbReference type="Proteomes" id="UP000000756">
    <property type="component" value="Chromosome"/>
</dbReference>
<dbReference type="GO" id="GO:0005524">
    <property type="term" value="F:ATP binding"/>
    <property type="evidence" value="ECO:0007669"/>
    <property type="project" value="UniProtKB-UniRule"/>
</dbReference>
<dbReference type="GO" id="GO:0004810">
    <property type="term" value="F:CCA tRNA nucleotidyltransferase activity"/>
    <property type="evidence" value="ECO:0007669"/>
    <property type="project" value="UniProtKB-UniRule"/>
</dbReference>
<dbReference type="GO" id="GO:0004112">
    <property type="term" value="F:cyclic-nucleotide phosphodiesterase activity"/>
    <property type="evidence" value="ECO:0007669"/>
    <property type="project" value="UniProtKB-UniRule"/>
</dbReference>
<dbReference type="GO" id="GO:0000287">
    <property type="term" value="F:magnesium ion binding"/>
    <property type="evidence" value="ECO:0007669"/>
    <property type="project" value="UniProtKB-UniRule"/>
</dbReference>
<dbReference type="GO" id="GO:0016791">
    <property type="term" value="F:phosphatase activity"/>
    <property type="evidence" value="ECO:0007669"/>
    <property type="project" value="UniProtKB-UniRule"/>
</dbReference>
<dbReference type="GO" id="GO:0000049">
    <property type="term" value="F:tRNA binding"/>
    <property type="evidence" value="ECO:0007669"/>
    <property type="project" value="UniProtKB-UniRule"/>
</dbReference>
<dbReference type="GO" id="GO:0042245">
    <property type="term" value="P:RNA repair"/>
    <property type="evidence" value="ECO:0007669"/>
    <property type="project" value="UniProtKB-KW"/>
</dbReference>
<dbReference type="GO" id="GO:0001680">
    <property type="term" value="P:tRNA 3'-terminal CCA addition"/>
    <property type="evidence" value="ECO:0007669"/>
    <property type="project" value="UniProtKB-UniRule"/>
</dbReference>
<dbReference type="CDD" id="cd00077">
    <property type="entry name" value="HDc"/>
    <property type="match status" value="1"/>
</dbReference>
<dbReference type="FunFam" id="1.10.3090.10:FF:000001">
    <property type="entry name" value="Multifunctional CCA protein"/>
    <property type="match status" value="1"/>
</dbReference>
<dbReference type="Gene3D" id="3.30.460.10">
    <property type="entry name" value="Beta Polymerase, domain 2"/>
    <property type="match status" value="1"/>
</dbReference>
<dbReference type="Gene3D" id="1.10.3090.10">
    <property type="entry name" value="cca-adding enzyme, domain 2"/>
    <property type="match status" value="1"/>
</dbReference>
<dbReference type="HAMAP" id="MF_01261">
    <property type="entry name" value="CCA_bact_type1"/>
    <property type="match status" value="1"/>
</dbReference>
<dbReference type="HAMAP" id="MF_01262">
    <property type="entry name" value="CCA_bact_type2"/>
    <property type="match status" value="1"/>
</dbReference>
<dbReference type="InterPro" id="IPR012006">
    <property type="entry name" value="CCA_bact"/>
</dbReference>
<dbReference type="InterPro" id="IPR003607">
    <property type="entry name" value="HD/PDEase_dom"/>
</dbReference>
<dbReference type="InterPro" id="IPR006674">
    <property type="entry name" value="HD_domain"/>
</dbReference>
<dbReference type="InterPro" id="IPR043519">
    <property type="entry name" value="NT_sf"/>
</dbReference>
<dbReference type="InterPro" id="IPR002646">
    <property type="entry name" value="PolA_pol_head_dom"/>
</dbReference>
<dbReference type="InterPro" id="IPR032828">
    <property type="entry name" value="PolyA_RNA-bd"/>
</dbReference>
<dbReference type="InterPro" id="IPR050124">
    <property type="entry name" value="tRNA_CCA-adding_enzyme"/>
</dbReference>
<dbReference type="NCBIfam" id="NF008137">
    <property type="entry name" value="PRK10885.1"/>
    <property type="match status" value="1"/>
</dbReference>
<dbReference type="PANTHER" id="PTHR47545">
    <property type="entry name" value="MULTIFUNCTIONAL CCA PROTEIN"/>
    <property type="match status" value="1"/>
</dbReference>
<dbReference type="PANTHER" id="PTHR47545:SF1">
    <property type="entry name" value="MULTIFUNCTIONAL CCA PROTEIN"/>
    <property type="match status" value="1"/>
</dbReference>
<dbReference type="Pfam" id="PF01966">
    <property type="entry name" value="HD"/>
    <property type="match status" value="1"/>
</dbReference>
<dbReference type="Pfam" id="PF01743">
    <property type="entry name" value="PolyA_pol"/>
    <property type="match status" value="1"/>
</dbReference>
<dbReference type="Pfam" id="PF12627">
    <property type="entry name" value="PolyA_pol_RNAbd"/>
    <property type="match status" value="1"/>
</dbReference>
<dbReference type="PIRSF" id="PIRSF000813">
    <property type="entry name" value="CCA_bact"/>
    <property type="match status" value="1"/>
</dbReference>
<dbReference type="SMART" id="SM00471">
    <property type="entry name" value="HDc"/>
    <property type="match status" value="1"/>
</dbReference>
<dbReference type="SUPFAM" id="SSF81301">
    <property type="entry name" value="Nucleotidyltransferase"/>
    <property type="match status" value="1"/>
</dbReference>
<dbReference type="SUPFAM" id="SSF81891">
    <property type="entry name" value="Poly A polymerase C-terminal region-like"/>
    <property type="match status" value="1"/>
</dbReference>
<dbReference type="PROSITE" id="PS51831">
    <property type="entry name" value="HD"/>
    <property type="match status" value="1"/>
</dbReference>
<sequence>MQTYLVGGAVRDRLLGLPQGDRDHLVVGATVEQMLALGFTQVGRDFPVFLHPKTQQEYALARTERKQGRGYTGFVCHASPEVTLEQDLLRRDLTVNAIAEDEAGQLHDPYGGIEDLKQRLLRHVSPAFAEDPLRILRVARFAARFHAQGFVVAPETLALMREMTEAGELAHLTPERVWKELEKVLLGPTPQVFFEVLRECGALAALFPELDALFGVPAPAKWHPEIDTGIHTMMVLAQACRLSPELAVRFAALCHDFGKGLTPPEFWPSHHGHGQKGLPLIRDFCERFRAPNECRDLALLVSDLHTHIHIAFELKPATLLKVFDKADAWRRPERFAQLLDACRADFHGRTGFEERVYAEPDYVARALAAAQAVPVKEIVAAGFKGEAIREQLAKRRLDAISRVRDEWTFLED</sequence>
<evidence type="ECO:0000255" key="1">
    <source>
        <dbReference type="HAMAP-Rule" id="MF_01261"/>
    </source>
</evidence>
<feature type="chain" id="PRO_1000054244" description="Multifunctional CCA protein">
    <location>
        <begin position="1"/>
        <end position="412"/>
    </location>
</feature>
<feature type="domain" description="HD" evidence="1">
    <location>
        <begin position="228"/>
        <end position="329"/>
    </location>
</feature>
<feature type="binding site" evidence="1">
    <location>
        <position position="8"/>
    </location>
    <ligand>
        <name>ATP</name>
        <dbReference type="ChEBI" id="CHEBI:30616"/>
    </ligand>
</feature>
<feature type="binding site" evidence="1">
    <location>
        <position position="8"/>
    </location>
    <ligand>
        <name>CTP</name>
        <dbReference type="ChEBI" id="CHEBI:37563"/>
    </ligand>
</feature>
<feature type="binding site" evidence="1">
    <location>
        <position position="11"/>
    </location>
    <ligand>
        <name>ATP</name>
        <dbReference type="ChEBI" id="CHEBI:30616"/>
    </ligand>
</feature>
<feature type="binding site" evidence="1">
    <location>
        <position position="11"/>
    </location>
    <ligand>
        <name>CTP</name>
        <dbReference type="ChEBI" id="CHEBI:37563"/>
    </ligand>
</feature>
<feature type="binding site" evidence="1">
    <location>
        <position position="21"/>
    </location>
    <ligand>
        <name>Mg(2+)</name>
        <dbReference type="ChEBI" id="CHEBI:18420"/>
    </ligand>
</feature>
<feature type="binding site" evidence="1">
    <location>
        <position position="23"/>
    </location>
    <ligand>
        <name>Mg(2+)</name>
        <dbReference type="ChEBI" id="CHEBI:18420"/>
    </ligand>
</feature>
<feature type="binding site" evidence="1">
    <location>
        <position position="91"/>
    </location>
    <ligand>
        <name>ATP</name>
        <dbReference type="ChEBI" id="CHEBI:30616"/>
    </ligand>
</feature>
<feature type="binding site" evidence="1">
    <location>
        <position position="91"/>
    </location>
    <ligand>
        <name>CTP</name>
        <dbReference type="ChEBI" id="CHEBI:37563"/>
    </ligand>
</feature>
<feature type="binding site" evidence="1">
    <location>
        <position position="137"/>
    </location>
    <ligand>
        <name>ATP</name>
        <dbReference type="ChEBI" id="CHEBI:30616"/>
    </ligand>
</feature>
<feature type="binding site" evidence="1">
    <location>
        <position position="137"/>
    </location>
    <ligand>
        <name>CTP</name>
        <dbReference type="ChEBI" id="CHEBI:37563"/>
    </ligand>
</feature>
<feature type="binding site" evidence="1">
    <location>
        <position position="140"/>
    </location>
    <ligand>
        <name>ATP</name>
        <dbReference type="ChEBI" id="CHEBI:30616"/>
    </ligand>
</feature>
<feature type="binding site" evidence="1">
    <location>
        <position position="140"/>
    </location>
    <ligand>
        <name>CTP</name>
        <dbReference type="ChEBI" id="CHEBI:37563"/>
    </ligand>
</feature>
<protein>
    <recommendedName>
        <fullName evidence="1">Multifunctional CCA protein</fullName>
    </recommendedName>
    <domain>
        <recommendedName>
            <fullName evidence="1">CCA-adding enzyme</fullName>
            <ecNumber evidence="1">2.7.7.72</ecNumber>
        </recommendedName>
        <alternativeName>
            <fullName evidence="1">CCA tRNA nucleotidyltransferase</fullName>
        </alternativeName>
        <alternativeName>
            <fullName evidence="1">tRNA CCA-pyrophosphorylase</fullName>
        </alternativeName>
        <alternativeName>
            <fullName evidence="1">tRNA adenylyl-/cytidylyl-transferase</fullName>
        </alternativeName>
        <alternativeName>
            <fullName evidence="1">tRNA nucleotidyltransferase</fullName>
        </alternativeName>
        <alternativeName>
            <fullName evidence="1">tRNA-NT</fullName>
        </alternativeName>
    </domain>
    <domain>
        <recommendedName>
            <fullName evidence="1">2'-nucleotidase</fullName>
            <ecNumber evidence="1">3.1.3.-</ecNumber>
        </recommendedName>
    </domain>
    <domain>
        <recommendedName>
            <fullName evidence="1">2',3'-cyclic phosphodiesterase</fullName>
            <ecNumber evidence="1">3.1.4.-</ecNumber>
        </recommendedName>
    </domain>
    <domain>
        <recommendedName>
            <fullName evidence="1">Phosphatase</fullName>
            <ecNumber evidence="1">3.1.3.-</ecNumber>
        </recommendedName>
    </domain>
</protein>
<accession>A0KPN1</accession>
<proteinExistence type="inferred from homology"/>
<keyword id="KW-0067">ATP-binding</keyword>
<keyword id="KW-0378">Hydrolase</keyword>
<keyword id="KW-0460">Magnesium</keyword>
<keyword id="KW-0479">Metal-binding</keyword>
<keyword id="KW-0511">Multifunctional enzyme</keyword>
<keyword id="KW-0533">Nickel</keyword>
<keyword id="KW-0547">Nucleotide-binding</keyword>
<keyword id="KW-0548">Nucleotidyltransferase</keyword>
<keyword id="KW-1185">Reference proteome</keyword>
<keyword id="KW-0692">RNA repair</keyword>
<keyword id="KW-0694">RNA-binding</keyword>
<keyword id="KW-0808">Transferase</keyword>
<keyword id="KW-0819">tRNA processing</keyword>
<reference key="1">
    <citation type="journal article" date="2006" name="J. Bacteriol.">
        <title>Genome sequence of Aeromonas hydrophila ATCC 7966T: jack of all trades.</title>
        <authorList>
            <person name="Seshadri R."/>
            <person name="Joseph S.W."/>
            <person name="Chopra A.K."/>
            <person name="Sha J."/>
            <person name="Shaw J."/>
            <person name="Graf J."/>
            <person name="Haft D.H."/>
            <person name="Wu M."/>
            <person name="Ren Q."/>
            <person name="Rosovitz M.J."/>
            <person name="Madupu R."/>
            <person name="Tallon L."/>
            <person name="Kim M."/>
            <person name="Jin S."/>
            <person name="Vuong H."/>
            <person name="Stine O.C."/>
            <person name="Ali A."/>
            <person name="Horneman A.J."/>
            <person name="Heidelberg J.F."/>
        </authorList>
    </citation>
    <scope>NUCLEOTIDE SEQUENCE [LARGE SCALE GENOMIC DNA]</scope>
    <source>
        <strain>ATCC 7966 / DSM 30187 / BCRC 13018 / CCUG 14551 / JCM 1027 / KCTC 2358 / NCIMB 9240 / NCTC 8049</strain>
    </source>
</reference>
<comment type="function">
    <text evidence="1">Catalyzes the addition and repair of the essential 3'-terminal CCA sequence in tRNAs without using a nucleic acid template. Adds these three nucleotides in the order of C, C, and A to the tRNA nucleotide-73, using CTP and ATP as substrates and producing inorganic pyrophosphate. tRNA 3'-terminal CCA addition is required both for tRNA processing and repair. Also involved in tRNA surveillance by mediating tandem CCA addition to generate a CCACCA at the 3' terminus of unstable tRNAs. While stable tRNAs receive only 3'-terminal CCA, unstable tRNAs are marked with CCACCA and rapidly degraded.</text>
</comment>
<comment type="catalytic activity">
    <reaction evidence="1">
        <text>a tRNA precursor + 2 CTP + ATP = a tRNA with a 3' CCA end + 3 diphosphate</text>
        <dbReference type="Rhea" id="RHEA:14433"/>
        <dbReference type="Rhea" id="RHEA-COMP:10465"/>
        <dbReference type="Rhea" id="RHEA-COMP:10468"/>
        <dbReference type="ChEBI" id="CHEBI:30616"/>
        <dbReference type="ChEBI" id="CHEBI:33019"/>
        <dbReference type="ChEBI" id="CHEBI:37563"/>
        <dbReference type="ChEBI" id="CHEBI:74896"/>
        <dbReference type="ChEBI" id="CHEBI:83071"/>
        <dbReference type="EC" id="2.7.7.72"/>
    </reaction>
</comment>
<comment type="catalytic activity">
    <reaction evidence="1">
        <text>a tRNA with a 3' CCA end + 2 CTP + ATP = a tRNA with a 3' CCACCA end + 3 diphosphate</text>
        <dbReference type="Rhea" id="RHEA:76235"/>
        <dbReference type="Rhea" id="RHEA-COMP:10468"/>
        <dbReference type="Rhea" id="RHEA-COMP:18655"/>
        <dbReference type="ChEBI" id="CHEBI:30616"/>
        <dbReference type="ChEBI" id="CHEBI:33019"/>
        <dbReference type="ChEBI" id="CHEBI:37563"/>
        <dbReference type="ChEBI" id="CHEBI:83071"/>
        <dbReference type="ChEBI" id="CHEBI:195187"/>
    </reaction>
    <physiologicalReaction direction="left-to-right" evidence="1">
        <dbReference type="Rhea" id="RHEA:76236"/>
    </physiologicalReaction>
</comment>
<comment type="cofactor">
    <cofactor evidence="1">
        <name>Mg(2+)</name>
        <dbReference type="ChEBI" id="CHEBI:18420"/>
    </cofactor>
    <text evidence="1">Magnesium is required for nucleotidyltransferase activity.</text>
</comment>
<comment type="cofactor">
    <cofactor evidence="1">
        <name>Ni(2+)</name>
        <dbReference type="ChEBI" id="CHEBI:49786"/>
    </cofactor>
    <text evidence="1">Nickel for phosphatase activity.</text>
</comment>
<comment type="subunit">
    <text evidence="1">Monomer. Can also form homodimers and oligomers.</text>
</comment>
<comment type="domain">
    <text evidence="1">Comprises two domains: an N-terminal domain containing the nucleotidyltransferase activity and a C-terminal HD domain associated with both phosphodiesterase and phosphatase activities.</text>
</comment>
<comment type="miscellaneous">
    <text evidence="1">A single active site specifically recognizes both ATP and CTP and is responsible for their addition.</text>
</comment>
<comment type="similarity">
    <text evidence="1">Belongs to the tRNA nucleotidyltransferase/poly(A) polymerase family. Bacterial CCA-adding enzyme type 1 subfamily.</text>
</comment>
<organism>
    <name type="scientific">Aeromonas hydrophila subsp. hydrophila (strain ATCC 7966 / DSM 30187 / BCRC 13018 / CCUG 14551 / JCM 1027 / KCTC 2358 / NCIMB 9240 / NCTC 8049)</name>
    <dbReference type="NCBI Taxonomy" id="380703"/>
    <lineage>
        <taxon>Bacteria</taxon>
        <taxon>Pseudomonadati</taxon>
        <taxon>Pseudomonadota</taxon>
        <taxon>Gammaproteobacteria</taxon>
        <taxon>Aeromonadales</taxon>
        <taxon>Aeromonadaceae</taxon>
        <taxon>Aeromonas</taxon>
    </lineage>
</organism>
<gene>
    <name evidence="1" type="primary">cca</name>
    <name type="ordered locus">AHA_3784</name>
</gene>
<name>CCA_AERHH</name>